<protein>
    <recommendedName>
        <fullName evidence="1">Small ribosomal subunit protein uS10</fullName>
    </recommendedName>
    <alternativeName>
        <fullName evidence="2">30S ribosomal protein S10</fullName>
    </alternativeName>
</protein>
<sequence>MQNQKIRIRLKAFDHRLIDQSAQEIVDTAKRTGAQVRGPIPLPTNRERYTVLISPHVNKDARDQYEIRTHKRVLDIVEPTEKTVDALMKLDLAAGVDVQIKLD</sequence>
<gene>
    <name evidence="1" type="primary">rpsJ</name>
    <name type="ordered locus">Csal_0420</name>
</gene>
<proteinExistence type="inferred from homology"/>
<name>RS10_CHRSD</name>
<reference key="1">
    <citation type="journal article" date="2011" name="Stand. Genomic Sci.">
        <title>Complete genome sequence of the halophilic and highly halotolerant Chromohalobacter salexigens type strain (1H11(T)).</title>
        <authorList>
            <person name="Copeland A."/>
            <person name="O'Connor K."/>
            <person name="Lucas S."/>
            <person name="Lapidus A."/>
            <person name="Berry K.W."/>
            <person name="Detter J.C."/>
            <person name="Del Rio T.G."/>
            <person name="Hammon N."/>
            <person name="Dalin E."/>
            <person name="Tice H."/>
            <person name="Pitluck S."/>
            <person name="Bruce D."/>
            <person name="Goodwin L."/>
            <person name="Han C."/>
            <person name="Tapia R."/>
            <person name="Saunders E."/>
            <person name="Schmutz J."/>
            <person name="Brettin T."/>
            <person name="Larimer F."/>
            <person name="Land M."/>
            <person name="Hauser L."/>
            <person name="Vargas C."/>
            <person name="Nieto J.J."/>
            <person name="Kyrpides N.C."/>
            <person name="Ivanova N."/>
            <person name="Goker M."/>
            <person name="Klenk H.P."/>
            <person name="Csonka L.N."/>
            <person name="Woyke T."/>
        </authorList>
    </citation>
    <scope>NUCLEOTIDE SEQUENCE [LARGE SCALE GENOMIC DNA]</scope>
    <source>
        <strain>ATCC BAA-138 / DSM 3043 / CIP 106854 / NCIMB 13768 / 1H11</strain>
    </source>
</reference>
<keyword id="KW-1185">Reference proteome</keyword>
<keyword id="KW-0687">Ribonucleoprotein</keyword>
<keyword id="KW-0689">Ribosomal protein</keyword>
<accession>Q1R0H6</accession>
<comment type="function">
    <text evidence="1">Involved in the binding of tRNA to the ribosomes.</text>
</comment>
<comment type="subunit">
    <text evidence="1">Part of the 30S ribosomal subunit.</text>
</comment>
<comment type="similarity">
    <text evidence="1">Belongs to the universal ribosomal protein uS10 family.</text>
</comment>
<organism>
    <name type="scientific">Chromohalobacter salexigens (strain ATCC BAA-138 / DSM 3043 / CIP 106854 / NCIMB 13768 / 1H11)</name>
    <dbReference type="NCBI Taxonomy" id="290398"/>
    <lineage>
        <taxon>Bacteria</taxon>
        <taxon>Pseudomonadati</taxon>
        <taxon>Pseudomonadota</taxon>
        <taxon>Gammaproteobacteria</taxon>
        <taxon>Oceanospirillales</taxon>
        <taxon>Halomonadaceae</taxon>
        <taxon>Chromohalobacter</taxon>
    </lineage>
</organism>
<evidence type="ECO:0000255" key="1">
    <source>
        <dbReference type="HAMAP-Rule" id="MF_00508"/>
    </source>
</evidence>
<evidence type="ECO:0000305" key="2"/>
<feature type="chain" id="PRO_0000258541" description="Small ribosomal subunit protein uS10">
    <location>
        <begin position="1"/>
        <end position="103"/>
    </location>
</feature>
<dbReference type="EMBL" id="CP000285">
    <property type="protein sequence ID" value="ABE57782.1"/>
    <property type="molecule type" value="Genomic_DNA"/>
</dbReference>
<dbReference type="RefSeq" id="WP_011505728.1">
    <property type="nucleotide sequence ID" value="NC_007963.1"/>
</dbReference>
<dbReference type="SMR" id="Q1R0H6"/>
<dbReference type="STRING" id="290398.Csal_0420"/>
<dbReference type="GeneID" id="95333173"/>
<dbReference type="KEGG" id="csa:Csal_0420"/>
<dbReference type="eggNOG" id="COG0051">
    <property type="taxonomic scope" value="Bacteria"/>
</dbReference>
<dbReference type="HOGENOM" id="CLU_122625_1_3_6"/>
<dbReference type="OrthoDB" id="9804464at2"/>
<dbReference type="Proteomes" id="UP000000239">
    <property type="component" value="Chromosome"/>
</dbReference>
<dbReference type="GO" id="GO:1990904">
    <property type="term" value="C:ribonucleoprotein complex"/>
    <property type="evidence" value="ECO:0007669"/>
    <property type="project" value="UniProtKB-KW"/>
</dbReference>
<dbReference type="GO" id="GO:0005840">
    <property type="term" value="C:ribosome"/>
    <property type="evidence" value="ECO:0007669"/>
    <property type="project" value="UniProtKB-KW"/>
</dbReference>
<dbReference type="GO" id="GO:0003735">
    <property type="term" value="F:structural constituent of ribosome"/>
    <property type="evidence" value="ECO:0007669"/>
    <property type="project" value="InterPro"/>
</dbReference>
<dbReference type="GO" id="GO:0000049">
    <property type="term" value="F:tRNA binding"/>
    <property type="evidence" value="ECO:0007669"/>
    <property type="project" value="UniProtKB-UniRule"/>
</dbReference>
<dbReference type="GO" id="GO:0006412">
    <property type="term" value="P:translation"/>
    <property type="evidence" value="ECO:0007669"/>
    <property type="project" value="UniProtKB-UniRule"/>
</dbReference>
<dbReference type="FunFam" id="3.30.70.600:FF:000001">
    <property type="entry name" value="30S ribosomal protein S10"/>
    <property type="match status" value="1"/>
</dbReference>
<dbReference type="Gene3D" id="3.30.70.600">
    <property type="entry name" value="Ribosomal protein S10 domain"/>
    <property type="match status" value="1"/>
</dbReference>
<dbReference type="HAMAP" id="MF_00508">
    <property type="entry name" value="Ribosomal_uS10"/>
    <property type="match status" value="1"/>
</dbReference>
<dbReference type="InterPro" id="IPR001848">
    <property type="entry name" value="Ribosomal_uS10"/>
</dbReference>
<dbReference type="InterPro" id="IPR018268">
    <property type="entry name" value="Ribosomal_uS10_CS"/>
</dbReference>
<dbReference type="InterPro" id="IPR027486">
    <property type="entry name" value="Ribosomal_uS10_dom"/>
</dbReference>
<dbReference type="InterPro" id="IPR036838">
    <property type="entry name" value="Ribosomal_uS10_dom_sf"/>
</dbReference>
<dbReference type="NCBIfam" id="NF001861">
    <property type="entry name" value="PRK00596.1"/>
    <property type="match status" value="1"/>
</dbReference>
<dbReference type="NCBIfam" id="TIGR01049">
    <property type="entry name" value="rpsJ_bact"/>
    <property type="match status" value="1"/>
</dbReference>
<dbReference type="PANTHER" id="PTHR11700">
    <property type="entry name" value="30S RIBOSOMAL PROTEIN S10 FAMILY MEMBER"/>
    <property type="match status" value="1"/>
</dbReference>
<dbReference type="Pfam" id="PF00338">
    <property type="entry name" value="Ribosomal_S10"/>
    <property type="match status" value="1"/>
</dbReference>
<dbReference type="PRINTS" id="PR00971">
    <property type="entry name" value="RIBOSOMALS10"/>
</dbReference>
<dbReference type="SMART" id="SM01403">
    <property type="entry name" value="Ribosomal_S10"/>
    <property type="match status" value="1"/>
</dbReference>
<dbReference type="SUPFAM" id="SSF54999">
    <property type="entry name" value="Ribosomal protein S10"/>
    <property type="match status" value="1"/>
</dbReference>
<dbReference type="PROSITE" id="PS00361">
    <property type="entry name" value="RIBOSOMAL_S10"/>
    <property type="match status" value="1"/>
</dbReference>